<comment type="function">
    <text evidence="1">Component of the acetyl coenzyme A carboxylase (ACC) complex. Biotin carboxylase (BC) catalyzes the carboxylation of biotin on its carrier protein (BCCP) and then the CO(2) group is transferred by the transcarboxylase to acetyl-CoA to form malonyl-CoA.</text>
</comment>
<comment type="catalytic activity">
    <reaction evidence="1">
        <text>N(6)-carboxybiotinyl-L-lysyl-[protein] + acetyl-CoA = N(6)-biotinyl-L-lysyl-[protein] + malonyl-CoA</text>
        <dbReference type="Rhea" id="RHEA:54728"/>
        <dbReference type="Rhea" id="RHEA-COMP:10505"/>
        <dbReference type="Rhea" id="RHEA-COMP:10506"/>
        <dbReference type="ChEBI" id="CHEBI:57288"/>
        <dbReference type="ChEBI" id="CHEBI:57384"/>
        <dbReference type="ChEBI" id="CHEBI:83144"/>
        <dbReference type="ChEBI" id="CHEBI:83145"/>
        <dbReference type="EC" id="2.1.3.15"/>
    </reaction>
</comment>
<comment type="cofactor">
    <cofactor evidence="1">
        <name>Zn(2+)</name>
        <dbReference type="ChEBI" id="CHEBI:29105"/>
    </cofactor>
    <text evidence="1">Binds 1 zinc ion per subunit.</text>
</comment>
<comment type="pathway">
    <text evidence="1">Lipid metabolism; malonyl-CoA biosynthesis; malonyl-CoA from acetyl-CoA: step 1/1.</text>
</comment>
<comment type="subunit">
    <text evidence="1">Acetyl-CoA carboxylase is a heterohexamer composed of biotin carboxyl carrier protein (AccB), biotin carboxylase (AccC) and two subunits each of ACCase subunit alpha (AccA) and ACCase subunit beta (AccD).</text>
</comment>
<comment type="subcellular location">
    <subcellularLocation>
        <location evidence="1">Cytoplasm</location>
    </subcellularLocation>
</comment>
<comment type="similarity">
    <text evidence="1">Belongs to the AccD/PCCB family.</text>
</comment>
<organism>
    <name type="scientific">Roseiflexus castenholzii (strain DSM 13941 / HLO8)</name>
    <dbReference type="NCBI Taxonomy" id="383372"/>
    <lineage>
        <taxon>Bacteria</taxon>
        <taxon>Bacillati</taxon>
        <taxon>Chloroflexota</taxon>
        <taxon>Chloroflexia</taxon>
        <taxon>Chloroflexales</taxon>
        <taxon>Roseiflexineae</taxon>
        <taxon>Roseiflexaceae</taxon>
        <taxon>Roseiflexus</taxon>
    </lineage>
</organism>
<protein>
    <recommendedName>
        <fullName evidence="1">Acetyl-coenzyme A carboxylase carboxyl transferase subunit beta 1</fullName>
        <shortName evidence="1">ACCase subunit beta 1</shortName>
        <shortName evidence="1">Acetyl-CoA carboxylase carboxyltransferase subunit beta 1</shortName>
        <ecNumber evidence="1">2.1.3.15</ecNumber>
    </recommendedName>
</protein>
<accession>A7NIE9</accession>
<sequence>MKDLFRRAPKRFTAARIENQAIPDNMWVKCPSCGDLIYTRQFSDNLKVCKCGYHMRLAAREWLGLLDDGSFVEFDAALAPVDALEFISPRHVYAHKLSESQEQTGLNDALITGSGAIEGMPLCVAVTEFEFIGGSMGGAFGERLARIIEQAADARVPLLTINASGGARQEEGTLALLQMAKVNMALTRLAAVGQPHIAVLVDPCYGGVLASYTSVADIIIAEPGARIGFAGRRVIEQTIRQKLPAHFQTAEFLLSHGMIDMVTPRGELRSVLATLLRLFHNAPERAADVQNAPALARA</sequence>
<gene>
    <name evidence="1" type="primary">accD1</name>
    <name type="ordered locus">Rcas_1152</name>
</gene>
<dbReference type="EC" id="2.1.3.15" evidence="1"/>
<dbReference type="EMBL" id="CP000804">
    <property type="protein sequence ID" value="ABU57249.1"/>
    <property type="molecule type" value="Genomic_DNA"/>
</dbReference>
<dbReference type="RefSeq" id="WP_012119679.1">
    <property type="nucleotide sequence ID" value="NC_009767.1"/>
</dbReference>
<dbReference type="SMR" id="A7NIE9"/>
<dbReference type="STRING" id="383372.Rcas_1152"/>
<dbReference type="KEGG" id="rca:Rcas_1152"/>
<dbReference type="eggNOG" id="COG0777">
    <property type="taxonomic scope" value="Bacteria"/>
</dbReference>
<dbReference type="HOGENOM" id="CLU_015486_1_1_0"/>
<dbReference type="OrthoDB" id="9772975at2"/>
<dbReference type="UniPathway" id="UPA00655">
    <property type="reaction ID" value="UER00711"/>
</dbReference>
<dbReference type="Proteomes" id="UP000000263">
    <property type="component" value="Chromosome"/>
</dbReference>
<dbReference type="GO" id="GO:0009317">
    <property type="term" value="C:acetyl-CoA carboxylase complex"/>
    <property type="evidence" value="ECO:0007669"/>
    <property type="project" value="InterPro"/>
</dbReference>
<dbReference type="GO" id="GO:0003989">
    <property type="term" value="F:acetyl-CoA carboxylase activity"/>
    <property type="evidence" value="ECO:0007669"/>
    <property type="project" value="InterPro"/>
</dbReference>
<dbReference type="GO" id="GO:0005524">
    <property type="term" value="F:ATP binding"/>
    <property type="evidence" value="ECO:0007669"/>
    <property type="project" value="UniProtKB-KW"/>
</dbReference>
<dbReference type="GO" id="GO:0016743">
    <property type="term" value="F:carboxyl- or carbamoyltransferase activity"/>
    <property type="evidence" value="ECO:0007669"/>
    <property type="project" value="UniProtKB-UniRule"/>
</dbReference>
<dbReference type="GO" id="GO:0008270">
    <property type="term" value="F:zinc ion binding"/>
    <property type="evidence" value="ECO:0007669"/>
    <property type="project" value="UniProtKB-UniRule"/>
</dbReference>
<dbReference type="GO" id="GO:0006633">
    <property type="term" value="P:fatty acid biosynthetic process"/>
    <property type="evidence" value="ECO:0007669"/>
    <property type="project" value="UniProtKB-KW"/>
</dbReference>
<dbReference type="GO" id="GO:2001295">
    <property type="term" value="P:malonyl-CoA biosynthetic process"/>
    <property type="evidence" value="ECO:0007669"/>
    <property type="project" value="UniProtKB-UniRule"/>
</dbReference>
<dbReference type="Gene3D" id="3.90.226.10">
    <property type="entry name" value="2-enoyl-CoA Hydratase, Chain A, domain 1"/>
    <property type="match status" value="1"/>
</dbReference>
<dbReference type="HAMAP" id="MF_01395">
    <property type="entry name" value="AcetylCoA_CT_beta"/>
    <property type="match status" value="1"/>
</dbReference>
<dbReference type="InterPro" id="IPR034733">
    <property type="entry name" value="AcCoA_carboxyl_beta"/>
</dbReference>
<dbReference type="InterPro" id="IPR000438">
    <property type="entry name" value="Acetyl_CoA_COase_Trfase_b_su"/>
</dbReference>
<dbReference type="InterPro" id="IPR029045">
    <property type="entry name" value="ClpP/crotonase-like_dom_sf"/>
</dbReference>
<dbReference type="InterPro" id="IPR011762">
    <property type="entry name" value="COA_CT_N"/>
</dbReference>
<dbReference type="InterPro" id="IPR041010">
    <property type="entry name" value="Znf-ACC"/>
</dbReference>
<dbReference type="NCBIfam" id="TIGR00515">
    <property type="entry name" value="accD"/>
    <property type="match status" value="1"/>
</dbReference>
<dbReference type="PANTHER" id="PTHR42995">
    <property type="entry name" value="ACETYL-COENZYME A CARBOXYLASE CARBOXYL TRANSFERASE SUBUNIT BETA, CHLOROPLASTIC"/>
    <property type="match status" value="1"/>
</dbReference>
<dbReference type="PANTHER" id="PTHR42995:SF5">
    <property type="entry name" value="ACETYL-COENZYME A CARBOXYLASE CARBOXYL TRANSFERASE SUBUNIT BETA, CHLOROPLASTIC"/>
    <property type="match status" value="1"/>
</dbReference>
<dbReference type="Pfam" id="PF01039">
    <property type="entry name" value="Carboxyl_trans"/>
    <property type="match status" value="1"/>
</dbReference>
<dbReference type="Pfam" id="PF17848">
    <property type="entry name" value="Zn_ribbon_ACC"/>
    <property type="match status" value="1"/>
</dbReference>
<dbReference type="PRINTS" id="PR01070">
    <property type="entry name" value="ACCCTRFRASEB"/>
</dbReference>
<dbReference type="SUPFAM" id="SSF52096">
    <property type="entry name" value="ClpP/crotonase"/>
    <property type="match status" value="1"/>
</dbReference>
<dbReference type="PROSITE" id="PS50980">
    <property type="entry name" value="COA_CT_NTER"/>
    <property type="match status" value="1"/>
</dbReference>
<name>ACCD1_ROSCS</name>
<feature type="chain" id="PRO_0000389840" description="Acetyl-coenzyme A carboxylase carboxyl transferase subunit beta 1">
    <location>
        <begin position="1"/>
        <end position="298"/>
    </location>
</feature>
<feature type="domain" description="CoA carboxyltransferase N-terminal" evidence="2">
    <location>
        <begin position="26"/>
        <end position="294"/>
    </location>
</feature>
<feature type="zinc finger region" description="C4-type" evidence="1">
    <location>
        <begin position="30"/>
        <end position="51"/>
    </location>
</feature>
<feature type="binding site" evidence="1">
    <location>
        <position position="30"/>
    </location>
    <ligand>
        <name>Zn(2+)</name>
        <dbReference type="ChEBI" id="CHEBI:29105"/>
    </ligand>
</feature>
<feature type="binding site" evidence="1">
    <location>
        <position position="33"/>
    </location>
    <ligand>
        <name>Zn(2+)</name>
        <dbReference type="ChEBI" id="CHEBI:29105"/>
    </ligand>
</feature>
<feature type="binding site" evidence="1">
    <location>
        <position position="49"/>
    </location>
    <ligand>
        <name>Zn(2+)</name>
        <dbReference type="ChEBI" id="CHEBI:29105"/>
    </ligand>
</feature>
<feature type="binding site" evidence="1">
    <location>
        <position position="51"/>
    </location>
    <ligand>
        <name>Zn(2+)</name>
        <dbReference type="ChEBI" id="CHEBI:29105"/>
    </ligand>
</feature>
<proteinExistence type="inferred from homology"/>
<evidence type="ECO:0000255" key="1">
    <source>
        <dbReference type="HAMAP-Rule" id="MF_01395"/>
    </source>
</evidence>
<evidence type="ECO:0000255" key="2">
    <source>
        <dbReference type="PROSITE-ProRule" id="PRU01136"/>
    </source>
</evidence>
<keyword id="KW-0067">ATP-binding</keyword>
<keyword id="KW-0963">Cytoplasm</keyword>
<keyword id="KW-0275">Fatty acid biosynthesis</keyword>
<keyword id="KW-0276">Fatty acid metabolism</keyword>
<keyword id="KW-0444">Lipid biosynthesis</keyword>
<keyword id="KW-0443">Lipid metabolism</keyword>
<keyword id="KW-0479">Metal-binding</keyword>
<keyword id="KW-0547">Nucleotide-binding</keyword>
<keyword id="KW-1185">Reference proteome</keyword>
<keyword id="KW-0808">Transferase</keyword>
<keyword id="KW-0862">Zinc</keyword>
<keyword id="KW-0863">Zinc-finger</keyword>
<reference key="1">
    <citation type="submission" date="2007-08" db="EMBL/GenBank/DDBJ databases">
        <title>Complete sequence of Roseiflexus castenholzii DSM 13941.</title>
        <authorList>
            <consortium name="US DOE Joint Genome Institute"/>
            <person name="Copeland A."/>
            <person name="Lucas S."/>
            <person name="Lapidus A."/>
            <person name="Barry K."/>
            <person name="Glavina del Rio T."/>
            <person name="Dalin E."/>
            <person name="Tice H."/>
            <person name="Pitluck S."/>
            <person name="Thompson L.S."/>
            <person name="Brettin T."/>
            <person name="Bruce D."/>
            <person name="Detter J.C."/>
            <person name="Han C."/>
            <person name="Tapia R."/>
            <person name="Schmutz J."/>
            <person name="Larimer F."/>
            <person name="Land M."/>
            <person name="Hauser L."/>
            <person name="Kyrpides N."/>
            <person name="Mikhailova N."/>
            <person name="Bryant D.A."/>
            <person name="Hanada S."/>
            <person name="Tsukatani Y."/>
            <person name="Richardson P."/>
        </authorList>
    </citation>
    <scope>NUCLEOTIDE SEQUENCE [LARGE SCALE GENOMIC DNA]</scope>
    <source>
        <strain>DSM 13941 / HLO8</strain>
    </source>
</reference>